<proteinExistence type="inferred from homology"/>
<feature type="chain" id="PRO_0000444838" description="Transcription activator AFTR-1">
    <location>
        <begin position="1"/>
        <end position="445"/>
    </location>
</feature>
<feature type="DNA-binding region" description="Zn(2)-C6 fungal-type" evidence="1">
    <location>
        <begin position="17"/>
        <end position="44"/>
    </location>
</feature>
<feature type="region of interest" description="Disordered" evidence="2">
    <location>
        <begin position="50"/>
        <end position="89"/>
    </location>
</feature>
<feature type="compositionally biased region" description="Basic residues" evidence="2">
    <location>
        <begin position="51"/>
        <end position="60"/>
    </location>
</feature>
<feature type="compositionally biased region" description="Polar residues" evidence="2">
    <location>
        <begin position="77"/>
        <end position="89"/>
    </location>
</feature>
<reference key="1">
    <citation type="journal article" date="2002" name="Genetics">
        <title>A conditionally dispensable chromosome controls host-specific pathogenicity in the fungal plant pathogen Alternaria alternata.</title>
        <authorList>
            <person name="Hatta R."/>
            <person name="Ito K."/>
            <person name="Hosaki Y."/>
            <person name="Tanaka T."/>
            <person name="Tanaka A."/>
            <person name="Yamamoto M."/>
            <person name="Akimitsu K."/>
            <person name="Tsuge T."/>
        </authorList>
    </citation>
    <scope>NUCLEOTIDE SEQUENCE [GENOMIC DNA]</scope>
    <source>
        <strain>NAF8</strain>
    </source>
</reference>
<reference key="2">
    <citation type="journal article" date="2013" name="FEMS Microbiol. Rev.">
        <title>Host-selective toxins produced by the plant pathogenic fungus Alternaria alternata.</title>
        <authorList>
            <person name="Tsuge T."/>
            <person name="Harimoto Y."/>
            <person name="Akimitsu K."/>
            <person name="Ohtani K."/>
            <person name="Kodama M."/>
            <person name="Akagi Y."/>
            <person name="Egusa M."/>
            <person name="Yamamoto M."/>
            <person name="Otani H."/>
        </authorList>
    </citation>
    <scope>REVIEW ON HOST-SELECTIVE TOXINS</scope>
</reference>
<sequence>MMLQCAPKKNERLRGSCDFCTQSKLRCNKNKPSCRRCTLQQQPCVYSVARRTGRPPKHPRKANDCQEANGQHGDQDPVTSTPGGSYQQQSNHLLDVEGDGANFTLADASTTAQGRETAASPALDNALLVGETFGFSSLLDDPLIQSDDFFSFSLCMPPGEKEGHMASPRTLNGSTGPCSPTVLSSIDVPHLPGRFGFLESSVESGLHGRTRPHLVEQPDKTVPSSFSEIEKIYDEGLTFSGLDSAINAVTNNGKGEPNISGTMAAHPHSKRQCFCSTSMSKLQMLVLHPTLCQKNSRARFDMALFLEEVVFSIYRDVLQCLVCQSKSLHSLASLCICTDWVIEALRDVAQDLSSGQDNLGGFRAGLYPPKDKFSICVGRFVLDDQLRESCTRSLVRYRLRKLIPIMDTMMKLNHRGAGGALSQAIRTMVEDVHHKIESALGMMEL</sequence>
<name>AFTR1_ALTAL</name>
<dbReference type="EMBL" id="AB070712">
    <property type="protein sequence ID" value="BAB69077.1"/>
    <property type="molecule type" value="Genomic_DNA"/>
</dbReference>
<dbReference type="SMR" id="Q96VB4"/>
<dbReference type="GO" id="GO:0005634">
    <property type="term" value="C:nucleus"/>
    <property type="evidence" value="ECO:0007669"/>
    <property type="project" value="UniProtKB-SubCell"/>
</dbReference>
<dbReference type="GO" id="GO:0003677">
    <property type="term" value="F:DNA binding"/>
    <property type="evidence" value="ECO:0007669"/>
    <property type="project" value="UniProtKB-KW"/>
</dbReference>
<dbReference type="GO" id="GO:0000981">
    <property type="term" value="F:DNA-binding transcription factor activity, RNA polymerase II-specific"/>
    <property type="evidence" value="ECO:0007669"/>
    <property type="project" value="InterPro"/>
</dbReference>
<dbReference type="GO" id="GO:0008270">
    <property type="term" value="F:zinc ion binding"/>
    <property type="evidence" value="ECO:0007669"/>
    <property type="project" value="InterPro"/>
</dbReference>
<dbReference type="CDD" id="cd00067">
    <property type="entry name" value="GAL4"/>
    <property type="match status" value="1"/>
</dbReference>
<dbReference type="Gene3D" id="4.10.240.10">
    <property type="entry name" value="Zn(2)-C6 fungal-type DNA-binding domain"/>
    <property type="match status" value="1"/>
</dbReference>
<dbReference type="InterPro" id="IPR050675">
    <property type="entry name" value="OAF3"/>
</dbReference>
<dbReference type="InterPro" id="IPR036864">
    <property type="entry name" value="Zn2-C6_fun-type_DNA-bd_sf"/>
</dbReference>
<dbReference type="InterPro" id="IPR001138">
    <property type="entry name" value="Zn2Cys6_DnaBD"/>
</dbReference>
<dbReference type="PANTHER" id="PTHR31069:SF31">
    <property type="entry name" value="MONODICTYPHENONE CLUSTER TRANSCRIPTION FACTOR-RELATED"/>
    <property type="match status" value="1"/>
</dbReference>
<dbReference type="PANTHER" id="PTHR31069">
    <property type="entry name" value="OLEATE-ACTIVATED TRANSCRIPTION FACTOR 1-RELATED"/>
    <property type="match status" value="1"/>
</dbReference>
<dbReference type="Pfam" id="PF00172">
    <property type="entry name" value="Zn_clus"/>
    <property type="match status" value="1"/>
</dbReference>
<dbReference type="PRINTS" id="PR00755">
    <property type="entry name" value="AFLATOXINBRP"/>
</dbReference>
<dbReference type="SMART" id="SM00066">
    <property type="entry name" value="GAL4"/>
    <property type="match status" value="1"/>
</dbReference>
<dbReference type="SUPFAM" id="SSF57701">
    <property type="entry name" value="Zn2/Cys6 DNA-binding domain"/>
    <property type="match status" value="1"/>
</dbReference>
<dbReference type="PROSITE" id="PS00463">
    <property type="entry name" value="ZN2_CY6_FUNGAL_1"/>
    <property type="match status" value="1"/>
</dbReference>
<dbReference type="PROSITE" id="PS50048">
    <property type="entry name" value="ZN2_CY6_FUNGAL_2"/>
    <property type="match status" value="1"/>
</dbReference>
<accession>Q96VB4</accession>
<comment type="function">
    <text evidence="5 6">Transcription factor that regulates the expression of the gene clusters that mediate the biosynthesis of the host-selective toxins (HSTs) AF-toxins responsible for Alternaria black spot of strawberry disease by the strawberry pathotype (Probable). On cellular level, AF-toxins affect plasma membrane of susceptible cells and cause a sudden increase in loss of K(+) after a few minutes of toxin treatment (PubMed:22846083).</text>
</comment>
<comment type="subcellular location">
    <subcellularLocation>
        <location evidence="1">Nucleus</location>
    </subcellularLocation>
</comment>
<comment type="miscellaneous">
    <text evidence="3">Gene clusters encoding host-selective toxins (HSTs) are localized on conditionally dispensable chromosomes (CDCs), also called supernumerary chromosomes, where they are present in multiple copies (PubMed:12019223). The CDCs are not essential for saprophytic growth but controls host-selective pathogenicity (PubMed:12019223).</text>
</comment>
<protein>
    <recommendedName>
        <fullName evidence="4">Transcription activator AFTR-1</fullName>
    </recommendedName>
    <alternativeName>
        <fullName evidence="4">ACT-toxin biosynthesis regulator 1</fullName>
    </alternativeName>
</protein>
<organism>
    <name type="scientific">Alternaria alternata</name>
    <name type="common">Alternaria rot fungus</name>
    <name type="synonym">Torula alternata</name>
    <dbReference type="NCBI Taxonomy" id="5599"/>
    <lineage>
        <taxon>Eukaryota</taxon>
        <taxon>Fungi</taxon>
        <taxon>Dikarya</taxon>
        <taxon>Ascomycota</taxon>
        <taxon>Pezizomycotina</taxon>
        <taxon>Dothideomycetes</taxon>
        <taxon>Pleosporomycetidae</taxon>
        <taxon>Pleosporales</taxon>
        <taxon>Pleosporineae</taxon>
        <taxon>Pleosporaceae</taxon>
        <taxon>Alternaria</taxon>
        <taxon>Alternaria sect. Alternaria</taxon>
        <taxon>Alternaria alternata complex</taxon>
    </lineage>
</organism>
<evidence type="ECO:0000255" key="1">
    <source>
        <dbReference type="PROSITE-ProRule" id="PRU00227"/>
    </source>
</evidence>
<evidence type="ECO:0000256" key="2">
    <source>
        <dbReference type="SAM" id="MobiDB-lite"/>
    </source>
</evidence>
<evidence type="ECO:0000269" key="3">
    <source>
    </source>
</evidence>
<evidence type="ECO:0000303" key="4">
    <source>
    </source>
</evidence>
<evidence type="ECO:0000303" key="5">
    <source>
    </source>
</evidence>
<evidence type="ECO:0000305" key="6">
    <source>
    </source>
</evidence>
<gene>
    <name evidence="4" type="primary">AFTR-1</name>
</gene>
<keyword id="KW-0238">DNA-binding</keyword>
<keyword id="KW-0479">Metal-binding</keyword>
<keyword id="KW-0539">Nucleus</keyword>
<keyword id="KW-0804">Transcription</keyword>
<keyword id="KW-0805">Transcription regulation</keyword>
<keyword id="KW-0862">Zinc</keyword>